<protein>
    <recommendedName>
        <fullName evidence="1">Ribosomal RNA large subunit methyltransferase E</fullName>
        <ecNumber evidence="1">2.1.1.166</ecNumber>
    </recommendedName>
    <alternativeName>
        <fullName evidence="1">23S rRNA Um2552 methyltransferase</fullName>
    </alternativeName>
    <alternativeName>
        <fullName evidence="1">rRNA (uridine-2'-O-)-methyltransferase</fullName>
    </alternativeName>
</protein>
<organism>
    <name type="scientific">Xanthomonas campestris pv. campestris (strain ATCC 33913 / DSM 3586 / NCPPB 528 / LMG 568 / P 25)</name>
    <dbReference type="NCBI Taxonomy" id="190485"/>
    <lineage>
        <taxon>Bacteria</taxon>
        <taxon>Pseudomonadati</taxon>
        <taxon>Pseudomonadota</taxon>
        <taxon>Gammaproteobacteria</taxon>
        <taxon>Lysobacterales</taxon>
        <taxon>Lysobacteraceae</taxon>
        <taxon>Xanthomonas</taxon>
    </lineage>
</organism>
<comment type="function">
    <text evidence="1">Specifically methylates the uridine in position 2552 of 23S rRNA at the 2'-O position of the ribose in the fully assembled 50S ribosomal subunit.</text>
</comment>
<comment type="catalytic activity">
    <reaction evidence="1">
        <text>uridine(2552) in 23S rRNA + S-adenosyl-L-methionine = 2'-O-methyluridine(2552) in 23S rRNA + S-adenosyl-L-homocysteine + H(+)</text>
        <dbReference type="Rhea" id="RHEA:42720"/>
        <dbReference type="Rhea" id="RHEA-COMP:10202"/>
        <dbReference type="Rhea" id="RHEA-COMP:10203"/>
        <dbReference type="ChEBI" id="CHEBI:15378"/>
        <dbReference type="ChEBI" id="CHEBI:57856"/>
        <dbReference type="ChEBI" id="CHEBI:59789"/>
        <dbReference type="ChEBI" id="CHEBI:65315"/>
        <dbReference type="ChEBI" id="CHEBI:74478"/>
        <dbReference type="EC" id="2.1.1.166"/>
    </reaction>
</comment>
<comment type="subcellular location">
    <subcellularLocation>
        <location evidence="1">Cytoplasm</location>
    </subcellularLocation>
</comment>
<comment type="similarity">
    <text evidence="1">Belongs to the class I-like SAM-binding methyltransferase superfamily. RNA methyltransferase RlmE family.</text>
</comment>
<comment type="sequence caution" evidence="2">
    <conflict type="erroneous initiation">
        <sequence resource="EMBL-CDS" id="AAM41006"/>
    </conflict>
</comment>
<proteinExistence type="inferred from homology"/>
<name>RLME_XANCP</name>
<reference key="1">
    <citation type="journal article" date="2002" name="Nature">
        <title>Comparison of the genomes of two Xanthomonas pathogens with differing host specificities.</title>
        <authorList>
            <person name="da Silva A.C.R."/>
            <person name="Ferro J.A."/>
            <person name="Reinach F.C."/>
            <person name="Farah C.S."/>
            <person name="Furlan L.R."/>
            <person name="Quaggio R.B."/>
            <person name="Monteiro-Vitorello C.B."/>
            <person name="Van Sluys M.A."/>
            <person name="Almeida N.F. Jr."/>
            <person name="Alves L.M.C."/>
            <person name="do Amaral A.M."/>
            <person name="Bertolini M.C."/>
            <person name="Camargo L.E.A."/>
            <person name="Camarotte G."/>
            <person name="Cannavan F."/>
            <person name="Cardozo J."/>
            <person name="Chambergo F."/>
            <person name="Ciapina L.P."/>
            <person name="Cicarelli R.M.B."/>
            <person name="Coutinho L.L."/>
            <person name="Cursino-Santos J.R."/>
            <person name="El-Dorry H."/>
            <person name="Faria J.B."/>
            <person name="Ferreira A.J.S."/>
            <person name="Ferreira R.C.C."/>
            <person name="Ferro M.I.T."/>
            <person name="Formighieri E.F."/>
            <person name="Franco M.C."/>
            <person name="Greggio C.C."/>
            <person name="Gruber A."/>
            <person name="Katsuyama A.M."/>
            <person name="Kishi L.T."/>
            <person name="Leite R.P."/>
            <person name="Lemos E.G.M."/>
            <person name="Lemos M.V.F."/>
            <person name="Locali E.C."/>
            <person name="Machado M.A."/>
            <person name="Madeira A.M.B.N."/>
            <person name="Martinez-Rossi N.M."/>
            <person name="Martins E.C."/>
            <person name="Meidanis J."/>
            <person name="Menck C.F.M."/>
            <person name="Miyaki C.Y."/>
            <person name="Moon D.H."/>
            <person name="Moreira L.M."/>
            <person name="Novo M.T.M."/>
            <person name="Okura V.K."/>
            <person name="Oliveira M.C."/>
            <person name="Oliveira V.R."/>
            <person name="Pereira H.A."/>
            <person name="Rossi A."/>
            <person name="Sena J.A.D."/>
            <person name="Silva C."/>
            <person name="de Souza R.F."/>
            <person name="Spinola L.A.F."/>
            <person name="Takita M.A."/>
            <person name="Tamura R.E."/>
            <person name="Teixeira E.C."/>
            <person name="Tezza R.I.D."/>
            <person name="Trindade dos Santos M."/>
            <person name="Truffi D."/>
            <person name="Tsai S.M."/>
            <person name="White F.F."/>
            <person name="Setubal J.C."/>
            <person name="Kitajima J.P."/>
        </authorList>
    </citation>
    <scope>NUCLEOTIDE SEQUENCE [LARGE SCALE GENOMIC DNA]</scope>
    <source>
        <strain>ATCC 33913 / DSM 3586 / NCPPB 528 / LMG 568 / P 25</strain>
    </source>
</reference>
<feature type="chain" id="PRO_0000155555" description="Ribosomal RNA large subunit methyltransferase E">
    <location>
        <begin position="1"/>
        <end position="210"/>
    </location>
</feature>
<feature type="active site" description="Proton acceptor" evidence="1">
    <location>
        <position position="162"/>
    </location>
</feature>
<feature type="binding site" evidence="1">
    <location>
        <position position="61"/>
    </location>
    <ligand>
        <name>S-adenosyl-L-methionine</name>
        <dbReference type="ChEBI" id="CHEBI:59789"/>
    </ligand>
</feature>
<feature type="binding site" evidence="1">
    <location>
        <position position="63"/>
    </location>
    <ligand>
        <name>S-adenosyl-L-methionine</name>
        <dbReference type="ChEBI" id="CHEBI:59789"/>
    </ligand>
</feature>
<feature type="binding site" evidence="1">
    <location>
        <position position="81"/>
    </location>
    <ligand>
        <name>S-adenosyl-L-methionine</name>
        <dbReference type="ChEBI" id="CHEBI:59789"/>
    </ligand>
</feature>
<feature type="binding site" evidence="1">
    <location>
        <position position="97"/>
    </location>
    <ligand>
        <name>S-adenosyl-L-methionine</name>
        <dbReference type="ChEBI" id="CHEBI:59789"/>
    </ligand>
</feature>
<feature type="binding site" evidence="1">
    <location>
        <position position="122"/>
    </location>
    <ligand>
        <name>S-adenosyl-L-methionine</name>
        <dbReference type="ChEBI" id="CHEBI:59789"/>
    </ligand>
</feature>
<sequence length="210" mass="23411">MPSRSKSSQRWLKEHFADPFVKKAQAEGMRSRAAYKLEELLQRDRLLKPGMVVVDLGAAPGGWSQQVRKSMGASGRVVALDILEMPPLAGVEFLHGDFREQAVLSEFEAMLGDVPVDLVLSDMAPNKSGMDAVDQPRMMHLAELAMEFADTHLKVGGAFLIKLFQGVGSDDYIRELRRRYEKVTIRKPAASRKRSAEVYVLGQGKRAQIK</sequence>
<keyword id="KW-0963">Cytoplasm</keyword>
<keyword id="KW-0489">Methyltransferase</keyword>
<keyword id="KW-1185">Reference proteome</keyword>
<keyword id="KW-0698">rRNA processing</keyword>
<keyword id="KW-0949">S-adenosyl-L-methionine</keyword>
<keyword id="KW-0808">Transferase</keyword>
<dbReference type="EC" id="2.1.1.166" evidence="1"/>
<dbReference type="EMBL" id="AE008922">
    <property type="protein sequence ID" value="AAM41006.1"/>
    <property type="status" value="ALT_INIT"/>
    <property type="molecule type" value="Genomic_DNA"/>
</dbReference>
<dbReference type="RefSeq" id="NP_637082.1">
    <property type="nucleotide sequence ID" value="NC_003902.1"/>
</dbReference>
<dbReference type="RefSeq" id="WP_012438562.1">
    <property type="nucleotide sequence ID" value="NC_003902.1"/>
</dbReference>
<dbReference type="SMR" id="Q8P9Y1"/>
<dbReference type="STRING" id="190485.XCC1712"/>
<dbReference type="EnsemblBacteria" id="AAM41006">
    <property type="protein sequence ID" value="AAM41006"/>
    <property type="gene ID" value="XCC1712"/>
</dbReference>
<dbReference type="GeneID" id="58013734"/>
<dbReference type="KEGG" id="xcc:XCC1712"/>
<dbReference type="PATRIC" id="fig|190485.4.peg.1826"/>
<dbReference type="eggNOG" id="COG0293">
    <property type="taxonomic scope" value="Bacteria"/>
</dbReference>
<dbReference type="HOGENOM" id="CLU_009422_4_0_6"/>
<dbReference type="OrthoDB" id="9790080at2"/>
<dbReference type="Proteomes" id="UP000001010">
    <property type="component" value="Chromosome"/>
</dbReference>
<dbReference type="GO" id="GO:0005737">
    <property type="term" value="C:cytoplasm"/>
    <property type="evidence" value="ECO:0007669"/>
    <property type="project" value="UniProtKB-SubCell"/>
</dbReference>
<dbReference type="GO" id="GO:0008650">
    <property type="term" value="F:rRNA (uridine-2'-O-)-methyltransferase activity"/>
    <property type="evidence" value="ECO:0000318"/>
    <property type="project" value="GO_Central"/>
</dbReference>
<dbReference type="GO" id="GO:0001510">
    <property type="term" value="P:RNA methylation"/>
    <property type="evidence" value="ECO:0000318"/>
    <property type="project" value="GO_Central"/>
</dbReference>
<dbReference type="FunFam" id="3.40.50.150:FF:000005">
    <property type="entry name" value="Ribosomal RNA large subunit methyltransferase E"/>
    <property type="match status" value="1"/>
</dbReference>
<dbReference type="Gene3D" id="3.40.50.150">
    <property type="entry name" value="Vaccinia Virus protein VP39"/>
    <property type="match status" value="1"/>
</dbReference>
<dbReference type="HAMAP" id="MF_01547">
    <property type="entry name" value="RNA_methyltr_E"/>
    <property type="match status" value="1"/>
</dbReference>
<dbReference type="InterPro" id="IPR050082">
    <property type="entry name" value="RNA_methyltr_RlmE"/>
</dbReference>
<dbReference type="InterPro" id="IPR002877">
    <property type="entry name" value="RNA_MeTrfase_FtsJ_dom"/>
</dbReference>
<dbReference type="InterPro" id="IPR015507">
    <property type="entry name" value="rRNA-MeTfrase_E"/>
</dbReference>
<dbReference type="InterPro" id="IPR029063">
    <property type="entry name" value="SAM-dependent_MTases_sf"/>
</dbReference>
<dbReference type="NCBIfam" id="NF008390">
    <property type="entry name" value="PRK11188.1"/>
    <property type="match status" value="1"/>
</dbReference>
<dbReference type="PANTHER" id="PTHR10920">
    <property type="entry name" value="RIBOSOMAL RNA METHYLTRANSFERASE"/>
    <property type="match status" value="1"/>
</dbReference>
<dbReference type="PANTHER" id="PTHR10920:SF18">
    <property type="entry name" value="RRNA METHYLTRANSFERASE 2, MITOCHONDRIAL"/>
    <property type="match status" value="1"/>
</dbReference>
<dbReference type="Pfam" id="PF01728">
    <property type="entry name" value="FtsJ"/>
    <property type="match status" value="1"/>
</dbReference>
<dbReference type="PIRSF" id="PIRSF005461">
    <property type="entry name" value="23S_rRNA_mtase"/>
    <property type="match status" value="1"/>
</dbReference>
<dbReference type="SUPFAM" id="SSF53335">
    <property type="entry name" value="S-adenosyl-L-methionine-dependent methyltransferases"/>
    <property type="match status" value="1"/>
</dbReference>
<accession>Q8P9Y1</accession>
<evidence type="ECO:0000255" key="1">
    <source>
        <dbReference type="HAMAP-Rule" id="MF_01547"/>
    </source>
</evidence>
<evidence type="ECO:0000305" key="2"/>
<gene>
    <name evidence="1" type="primary">rlmE</name>
    <name evidence="1" type="synonym">ftsJ</name>
    <name evidence="1" type="synonym">rrmJ</name>
    <name type="ordered locus">XCC1712</name>
</gene>